<name>RIMO_LEPCP</name>
<protein>
    <recommendedName>
        <fullName evidence="1">Ribosomal protein uS12 methylthiotransferase RimO</fullName>
        <shortName evidence="1">uS12 MTTase</shortName>
        <shortName evidence="1">uS12 methylthiotransferase</shortName>
        <ecNumber evidence="1">2.8.4.4</ecNumber>
    </recommendedName>
    <alternativeName>
        <fullName evidence="1">Ribosomal protein uS12 (aspartate-C(3))-methylthiotransferase</fullName>
    </alternativeName>
    <alternativeName>
        <fullName evidence="1">Ribosome maturation factor RimO</fullName>
    </alternativeName>
</protein>
<sequence>MNDLAISLPTPAAGAAAPRIGFVSLGCPKALTDSELILTQLSAEGYATSKTFQGADLVIVNTCGFIDDAVRESLDTIGEALAENGKVIVTGCLGAKTGDGGGNLVRQMHPSVLAVTGPHATQEVMDAVHQHVPKPHDPFVDLVPPAGIKLTPKHYAYLKISEGCNHRCSFCIIPSMRGDLVSRPIGDVLTEAQRLFEGGVKELLVISQDTSAYGVDVKYRTGFWDGKPVKTRMLDLVAQLGELARKHGAWVRLHYVYPYPHVDEVLPLMAEGLVLPYLDVPFQHAHPDVLKRMKRPASGERNLERLLKWREACPQIVVRSTFIAGFPGETEAEFEYLLDFLKEAQIDRAGCFAYSPIEGAPANLLDGALPDAVREERRARFMAVAEAVSTAKLQRRVGSSMQVLVDSAPAMGRKGGVGRSYADAPEIDGTVKILPPSKASKTMKVGEFSRVRIVGSQGHDLIGELI</sequence>
<reference key="1">
    <citation type="submission" date="2008-03" db="EMBL/GenBank/DDBJ databases">
        <title>Complete sequence of Leptothrix cholodnii SP-6.</title>
        <authorList>
            <consortium name="US DOE Joint Genome Institute"/>
            <person name="Copeland A."/>
            <person name="Lucas S."/>
            <person name="Lapidus A."/>
            <person name="Glavina del Rio T."/>
            <person name="Dalin E."/>
            <person name="Tice H."/>
            <person name="Bruce D."/>
            <person name="Goodwin L."/>
            <person name="Pitluck S."/>
            <person name="Chertkov O."/>
            <person name="Brettin T."/>
            <person name="Detter J.C."/>
            <person name="Han C."/>
            <person name="Kuske C.R."/>
            <person name="Schmutz J."/>
            <person name="Larimer F."/>
            <person name="Land M."/>
            <person name="Hauser L."/>
            <person name="Kyrpides N."/>
            <person name="Lykidis A."/>
            <person name="Emerson D."/>
            <person name="Richardson P."/>
        </authorList>
    </citation>
    <scope>NUCLEOTIDE SEQUENCE [LARGE SCALE GENOMIC DNA]</scope>
    <source>
        <strain>ATCC 51168 / LMG 8142 / SP-6</strain>
    </source>
</reference>
<gene>
    <name evidence="1" type="primary">rimO</name>
    <name type="ordered locus">Lcho_2055</name>
</gene>
<dbReference type="EC" id="2.8.4.4" evidence="1"/>
<dbReference type="EMBL" id="CP001013">
    <property type="protein sequence ID" value="ACB34322.1"/>
    <property type="molecule type" value="Genomic_DNA"/>
</dbReference>
<dbReference type="RefSeq" id="WP_012347082.1">
    <property type="nucleotide sequence ID" value="NC_010524.1"/>
</dbReference>
<dbReference type="SMR" id="B1Y223"/>
<dbReference type="STRING" id="395495.Lcho_2055"/>
<dbReference type="KEGG" id="lch:Lcho_2055"/>
<dbReference type="eggNOG" id="COG0621">
    <property type="taxonomic scope" value="Bacteria"/>
</dbReference>
<dbReference type="HOGENOM" id="CLU_018697_0_0_4"/>
<dbReference type="OrthoDB" id="9805215at2"/>
<dbReference type="Proteomes" id="UP000001693">
    <property type="component" value="Chromosome"/>
</dbReference>
<dbReference type="GO" id="GO:0005829">
    <property type="term" value="C:cytosol"/>
    <property type="evidence" value="ECO:0007669"/>
    <property type="project" value="TreeGrafter"/>
</dbReference>
<dbReference type="GO" id="GO:0051539">
    <property type="term" value="F:4 iron, 4 sulfur cluster binding"/>
    <property type="evidence" value="ECO:0007669"/>
    <property type="project" value="UniProtKB-UniRule"/>
</dbReference>
<dbReference type="GO" id="GO:0035599">
    <property type="term" value="F:aspartic acid methylthiotransferase activity"/>
    <property type="evidence" value="ECO:0007669"/>
    <property type="project" value="TreeGrafter"/>
</dbReference>
<dbReference type="GO" id="GO:0046872">
    <property type="term" value="F:metal ion binding"/>
    <property type="evidence" value="ECO:0007669"/>
    <property type="project" value="UniProtKB-KW"/>
</dbReference>
<dbReference type="GO" id="GO:0103039">
    <property type="term" value="F:protein methylthiotransferase activity"/>
    <property type="evidence" value="ECO:0007669"/>
    <property type="project" value="UniProtKB-EC"/>
</dbReference>
<dbReference type="GO" id="GO:0006400">
    <property type="term" value="P:tRNA modification"/>
    <property type="evidence" value="ECO:0007669"/>
    <property type="project" value="InterPro"/>
</dbReference>
<dbReference type="CDD" id="cd01335">
    <property type="entry name" value="Radical_SAM"/>
    <property type="match status" value="1"/>
</dbReference>
<dbReference type="FunFam" id="3.40.50.12160:FF:000002">
    <property type="entry name" value="Ribosomal protein S12 methylthiotransferase RimO"/>
    <property type="match status" value="1"/>
</dbReference>
<dbReference type="FunFam" id="3.80.30.20:FF:000001">
    <property type="entry name" value="tRNA-2-methylthio-N(6)-dimethylallyladenosine synthase 2"/>
    <property type="match status" value="1"/>
</dbReference>
<dbReference type="Gene3D" id="3.40.50.12160">
    <property type="entry name" value="Methylthiotransferase, N-terminal domain"/>
    <property type="match status" value="1"/>
</dbReference>
<dbReference type="Gene3D" id="2.40.50.140">
    <property type="entry name" value="Nucleic acid-binding proteins"/>
    <property type="match status" value="1"/>
</dbReference>
<dbReference type="Gene3D" id="3.80.30.20">
    <property type="entry name" value="tm_1862 like domain"/>
    <property type="match status" value="1"/>
</dbReference>
<dbReference type="HAMAP" id="MF_01865">
    <property type="entry name" value="MTTase_RimO"/>
    <property type="match status" value="1"/>
</dbReference>
<dbReference type="InterPro" id="IPR006638">
    <property type="entry name" value="Elp3/MiaA/NifB-like_rSAM"/>
</dbReference>
<dbReference type="InterPro" id="IPR005839">
    <property type="entry name" value="Methylthiotransferase"/>
</dbReference>
<dbReference type="InterPro" id="IPR020612">
    <property type="entry name" value="Methylthiotransferase_CS"/>
</dbReference>
<dbReference type="InterPro" id="IPR013848">
    <property type="entry name" value="Methylthiotransferase_N"/>
</dbReference>
<dbReference type="InterPro" id="IPR038135">
    <property type="entry name" value="Methylthiotransferase_N_sf"/>
</dbReference>
<dbReference type="InterPro" id="IPR012340">
    <property type="entry name" value="NA-bd_OB-fold"/>
</dbReference>
<dbReference type="InterPro" id="IPR005840">
    <property type="entry name" value="Ribosomal_uS12_MeSTrfase_RimO"/>
</dbReference>
<dbReference type="InterPro" id="IPR007197">
    <property type="entry name" value="rSAM"/>
</dbReference>
<dbReference type="InterPro" id="IPR023404">
    <property type="entry name" value="rSAM_horseshoe"/>
</dbReference>
<dbReference type="InterPro" id="IPR002792">
    <property type="entry name" value="TRAM_dom"/>
</dbReference>
<dbReference type="NCBIfam" id="TIGR01125">
    <property type="entry name" value="30S ribosomal protein S12 methylthiotransferase RimO"/>
    <property type="match status" value="1"/>
</dbReference>
<dbReference type="NCBIfam" id="TIGR00089">
    <property type="entry name" value="MiaB/RimO family radical SAM methylthiotransferase"/>
    <property type="match status" value="1"/>
</dbReference>
<dbReference type="PANTHER" id="PTHR43837">
    <property type="entry name" value="RIBOSOMAL PROTEIN S12 METHYLTHIOTRANSFERASE RIMO"/>
    <property type="match status" value="1"/>
</dbReference>
<dbReference type="PANTHER" id="PTHR43837:SF1">
    <property type="entry name" value="RIBOSOMAL PROTEIN US12 METHYLTHIOTRANSFERASE RIMO"/>
    <property type="match status" value="1"/>
</dbReference>
<dbReference type="Pfam" id="PF04055">
    <property type="entry name" value="Radical_SAM"/>
    <property type="match status" value="1"/>
</dbReference>
<dbReference type="Pfam" id="PF18693">
    <property type="entry name" value="TRAM_2"/>
    <property type="match status" value="1"/>
</dbReference>
<dbReference type="Pfam" id="PF00919">
    <property type="entry name" value="UPF0004"/>
    <property type="match status" value="1"/>
</dbReference>
<dbReference type="SFLD" id="SFLDG01082">
    <property type="entry name" value="B12-binding_domain_containing"/>
    <property type="match status" value="1"/>
</dbReference>
<dbReference type="SFLD" id="SFLDG01061">
    <property type="entry name" value="methylthiotransferase"/>
    <property type="match status" value="1"/>
</dbReference>
<dbReference type="SFLD" id="SFLDF00274">
    <property type="entry name" value="ribosomal_protein_S12_methylth"/>
    <property type="match status" value="1"/>
</dbReference>
<dbReference type="SMART" id="SM00729">
    <property type="entry name" value="Elp3"/>
    <property type="match status" value="1"/>
</dbReference>
<dbReference type="SUPFAM" id="SSF102114">
    <property type="entry name" value="Radical SAM enzymes"/>
    <property type="match status" value="1"/>
</dbReference>
<dbReference type="PROSITE" id="PS51449">
    <property type="entry name" value="MTTASE_N"/>
    <property type="match status" value="1"/>
</dbReference>
<dbReference type="PROSITE" id="PS01278">
    <property type="entry name" value="MTTASE_RADICAL"/>
    <property type="match status" value="1"/>
</dbReference>
<dbReference type="PROSITE" id="PS51918">
    <property type="entry name" value="RADICAL_SAM"/>
    <property type="match status" value="1"/>
</dbReference>
<dbReference type="PROSITE" id="PS50926">
    <property type="entry name" value="TRAM"/>
    <property type="match status" value="1"/>
</dbReference>
<accession>B1Y223</accession>
<proteinExistence type="inferred from homology"/>
<comment type="function">
    <text evidence="1">Catalyzes the methylthiolation of an aspartic acid residue of ribosomal protein uS12.</text>
</comment>
<comment type="catalytic activity">
    <reaction evidence="1">
        <text>L-aspartate(89)-[ribosomal protein uS12]-hydrogen + (sulfur carrier)-SH + AH2 + 2 S-adenosyl-L-methionine = 3-methylsulfanyl-L-aspartate(89)-[ribosomal protein uS12]-hydrogen + (sulfur carrier)-H + 5'-deoxyadenosine + L-methionine + A + S-adenosyl-L-homocysteine + 2 H(+)</text>
        <dbReference type="Rhea" id="RHEA:37087"/>
        <dbReference type="Rhea" id="RHEA-COMP:10460"/>
        <dbReference type="Rhea" id="RHEA-COMP:10461"/>
        <dbReference type="Rhea" id="RHEA-COMP:14737"/>
        <dbReference type="Rhea" id="RHEA-COMP:14739"/>
        <dbReference type="ChEBI" id="CHEBI:13193"/>
        <dbReference type="ChEBI" id="CHEBI:15378"/>
        <dbReference type="ChEBI" id="CHEBI:17319"/>
        <dbReference type="ChEBI" id="CHEBI:17499"/>
        <dbReference type="ChEBI" id="CHEBI:29917"/>
        <dbReference type="ChEBI" id="CHEBI:29961"/>
        <dbReference type="ChEBI" id="CHEBI:57844"/>
        <dbReference type="ChEBI" id="CHEBI:57856"/>
        <dbReference type="ChEBI" id="CHEBI:59789"/>
        <dbReference type="ChEBI" id="CHEBI:64428"/>
        <dbReference type="ChEBI" id="CHEBI:73599"/>
        <dbReference type="EC" id="2.8.4.4"/>
    </reaction>
</comment>
<comment type="cofactor">
    <cofactor evidence="1">
        <name>[4Fe-4S] cluster</name>
        <dbReference type="ChEBI" id="CHEBI:49883"/>
    </cofactor>
    <text evidence="1">Binds 2 [4Fe-4S] clusters. One cluster is coordinated with 3 cysteines and an exchangeable S-adenosyl-L-methionine.</text>
</comment>
<comment type="subcellular location">
    <subcellularLocation>
        <location evidence="1">Cytoplasm</location>
    </subcellularLocation>
</comment>
<comment type="similarity">
    <text evidence="1">Belongs to the methylthiotransferase family. RimO subfamily.</text>
</comment>
<evidence type="ECO:0000255" key="1">
    <source>
        <dbReference type="HAMAP-Rule" id="MF_01865"/>
    </source>
</evidence>
<evidence type="ECO:0000255" key="2">
    <source>
        <dbReference type="PROSITE-ProRule" id="PRU01266"/>
    </source>
</evidence>
<feature type="chain" id="PRO_0000374883" description="Ribosomal protein uS12 methylthiotransferase RimO">
    <location>
        <begin position="1"/>
        <end position="466"/>
    </location>
</feature>
<feature type="domain" description="MTTase N-terminal" evidence="1">
    <location>
        <begin position="18"/>
        <end position="133"/>
    </location>
</feature>
<feature type="domain" description="Radical SAM core" evidence="2">
    <location>
        <begin position="150"/>
        <end position="391"/>
    </location>
</feature>
<feature type="domain" description="TRAM" evidence="1">
    <location>
        <begin position="394"/>
        <end position="466"/>
    </location>
</feature>
<feature type="binding site" evidence="1">
    <location>
        <position position="27"/>
    </location>
    <ligand>
        <name>[4Fe-4S] cluster</name>
        <dbReference type="ChEBI" id="CHEBI:49883"/>
        <label>1</label>
    </ligand>
</feature>
<feature type="binding site" evidence="1">
    <location>
        <position position="63"/>
    </location>
    <ligand>
        <name>[4Fe-4S] cluster</name>
        <dbReference type="ChEBI" id="CHEBI:49883"/>
        <label>1</label>
    </ligand>
</feature>
<feature type="binding site" evidence="1">
    <location>
        <position position="92"/>
    </location>
    <ligand>
        <name>[4Fe-4S] cluster</name>
        <dbReference type="ChEBI" id="CHEBI:49883"/>
        <label>1</label>
    </ligand>
</feature>
<feature type="binding site" evidence="1">
    <location>
        <position position="164"/>
    </location>
    <ligand>
        <name>[4Fe-4S] cluster</name>
        <dbReference type="ChEBI" id="CHEBI:49883"/>
        <label>2</label>
        <note>4Fe-4S-S-AdoMet</note>
    </ligand>
</feature>
<feature type="binding site" evidence="1">
    <location>
        <position position="168"/>
    </location>
    <ligand>
        <name>[4Fe-4S] cluster</name>
        <dbReference type="ChEBI" id="CHEBI:49883"/>
        <label>2</label>
        <note>4Fe-4S-S-AdoMet</note>
    </ligand>
</feature>
<feature type="binding site" evidence="1">
    <location>
        <position position="171"/>
    </location>
    <ligand>
        <name>[4Fe-4S] cluster</name>
        <dbReference type="ChEBI" id="CHEBI:49883"/>
        <label>2</label>
        <note>4Fe-4S-S-AdoMet</note>
    </ligand>
</feature>
<keyword id="KW-0004">4Fe-4S</keyword>
<keyword id="KW-0963">Cytoplasm</keyword>
<keyword id="KW-0408">Iron</keyword>
<keyword id="KW-0411">Iron-sulfur</keyword>
<keyword id="KW-0479">Metal-binding</keyword>
<keyword id="KW-1185">Reference proteome</keyword>
<keyword id="KW-0949">S-adenosyl-L-methionine</keyword>
<keyword id="KW-0808">Transferase</keyword>
<organism>
    <name type="scientific">Leptothrix cholodnii (strain ATCC 51168 / LMG 8142 / SP-6)</name>
    <name type="common">Leptothrix discophora (strain SP-6)</name>
    <dbReference type="NCBI Taxonomy" id="395495"/>
    <lineage>
        <taxon>Bacteria</taxon>
        <taxon>Pseudomonadati</taxon>
        <taxon>Pseudomonadota</taxon>
        <taxon>Betaproteobacteria</taxon>
        <taxon>Burkholderiales</taxon>
        <taxon>Sphaerotilaceae</taxon>
        <taxon>Leptothrix</taxon>
    </lineage>
</organism>